<proteinExistence type="inferred from homology"/>
<feature type="chain" id="PRO_1000164266" description="Chaperone protein DnaJ">
    <location>
        <begin position="1"/>
        <end position="376"/>
    </location>
</feature>
<feature type="domain" description="J" evidence="1">
    <location>
        <begin position="5"/>
        <end position="69"/>
    </location>
</feature>
<feature type="repeat" description="CXXCXGXG motif">
    <location>
        <begin position="146"/>
        <end position="153"/>
    </location>
</feature>
<feature type="repeat" description="CXXCXGXG motif">
    <location>
        <begin position="163"/>
        <end position="170"/>
    </location>
</feature>
<feature type="repeat" description="CXXCXGXG motif">
    <location>
        <begin position="189"/>
        <end position="196"/>
    </location>
</feature>
<feature type="repeat" description="CXXCXGXG motif">
    <location>
        <begin position="203"/>
        <end position="210"/>
    </location>
</feature>
<feature type="zinc finger region" description="CR-type" evidence="1">
    <location>
        <begin position="133"/>
        <end position="215"/>
    </location>
</feature>
<feature type="binding site" evidence="1">
    <location>
        <position position="146"/>
    </location>
    <ligand>
        <name>Zn(2+)</name>
        <dbReference type="ChEBI" id="CHEBI:29105"/>
        <label>1</label>
    </ligand>
</feature>
<feature type="binding site" evidence="1">
    <location>
        <position position="149"/>
    </location>
    <ligand>
        <name>Zn(2+)</name>
        <dbReference type="ChEBI" id="CHEBI:29105"/>
        <label>1</label>
    </ligand>
</feature>
<feature type="binding site" evidence="1">
    <location>
        <position position="163"/>
    </location>
    <ligand>
        <name>Zn(2+)</name>
        <dbReference type="ChEBI" id="CHEBI:29105"/>
        <label>2</label>
    </ligand>
</feature>
<feature type="binding site" evidence="1">
    <location>
        <position position="166"/>
    </location>
    <ligand>
        <name>Zn(2+)</name>
        <dbReference type="ChEBI" id="CHEBI:29105"/>
        <label>2</label>
    </ligand>
</feature>
<feature type="binding site" evidence="1">
    <location>
        <position position="189"/>
    </location>
    <ligand>
        <name>Zn(2+)</name>
        <dbReference type="ChEBI" id="CHEBI:29105"/>
        <label>2</label>
    </ligand>
</feature>
<feature type="binding site" evidence="1">
    <location>
        <position position="192"/>
    </location>
    <ligand>
        <name>Zn(2+)</name>
        <dbReference type="ChEBI" id="CHEBI:29105"/>
        <label>2</label>
    </ligand>
</feature>
<feature type="binding site" evidence="1">
    <location>
        <position position="203"/>
    </location>
    <ligand>
        <name>Zn(2+)</name>
        <dbReference type="ChEBI" id="CHEBI:29105"/>
        <label>1</label>
    </ligand>
</feature>
<feature type="binding site" evidence="1">
    <location>
        <position position="206"/>
    </location>
    <ligand>
        <name>Zn(2+)</name>
        <dbReference type="ChEBI" id="CHEBI:29105"/>
        <label>1</label>
    </ligand>
</feature>
<dbReference type="EMBL" id="CP001175">
    <property type="protein sequence ID" value="ACK39446.1"/>
    <property type="molecule type" value="Genomic_DNA"/>
</dbReference>
<dbReference type="RefSeq" id="WP_003721979.1">
    <property type="nucleotide sequence ID" value="NC_011660.1"/>
</dbReference>
<dbReference type="SMR" id="B8DE39"/>
<dbReference type="KEGG" id="lmh:LMHCC_1098"/>
<dbReference type="HOGENOM" id="CLU_017633_0_7_9"/>
<dbReference type="GO" id="GO:0005737">
    <property type="term" value="C:cytoplasm"/>
    <property type="evidence" value="ECO:0007669"/>
    <property type="project" value="UniProtKB-SubCell"/>
</dbReference>
<dbReference type="GO" id="GO:0005524">
    <property type="term" value="F:ATP binding"/>
    <property type="evidence" value="ECO:0007669"/>
    <property type="project" value="InterPro"/>
</dbReference>
<dbReference type="GO" id="GO:0031072">
    <property type="term" value="F:heat shock protein binding"/>
    <property type="evidence" value="ECO:0007669"/>
    <property type="project" value="InterPro"/>
</dbReference>
<dbReference type="GO" id="GO:0051082">
    <property type="term" value="F:unfolded protein binding"/>
    <property type="evidence" value="ECO:0007669"/>
    <property type="project" value="UniProtKB-UniRule"/>
</dbReference>
<dbReference type="GO" id="GO:0008270">
    <property type="term" value="F:zinc ion binding"/>
    <property type="evidence" value="ECO:0007669"/>
    <property type="project" value="UniProtKB-UniRule"/>
</dbReference>
<dbReference type="GO" id="GO:0051085">
    <property type="term" value="P:chaperone cofactor-dependent protein refolding"/>
    <property type="evidence" value="ECO:0007669"/>
    <property type="project" value="TreeGrafter"/>
</dbReference>
<dbReference type="GO" id="GO:0006260">
    <property type="term" value="P:DNA replication"/>
    <property type="evidence" value="ECO:0007669"/>
    <property type="project" value="UniProtKB-KW"/>
</dbReference>
<dbReference type="GO" id="GO:0042026">
    <property type="term" value="P:protein refolding"/>
    <property type="evidence" value="ECO:0007669"/>
    <property type="project" value="TreeGrafter"/>
</dbReference>
<dbReference type="GO" id="GO:0009408">
    <property type="term" value="P:response to heat"/>
    <property type="evidence" value="ECO:0007669"/>
    <property type="project" value="InterPro"/>
</dbReference>
<dbReference type="CDD" id="cd06257">
    <property type="entry name" value="DnaJ"/>
    <property type="match status" value="1"/>
</dbReference>
<dbReference type="CDD" id="cd10747">
    <property type="entry name" value="DnaJ_C"/>
    <property type="match status" value="1"/>
</dbReference>
<dbReference type="CDD" id="cd10719">
    <property type="entry name" value="DnaJ_zf"/>
    <property type="match status" value="1"/>
</dbReference>
<dbReference type="FunFam" id="1.10.287.110:FF:000031">
    <property type="entry name" value="Molecular chaperone DnaJ"/>
    <property type="match status" value="1"/>
</dbReference>
<dbReference type="FunFam" id="2.10.230.10:FF:000002">
    <property type="entry name" value="Molecular chaperone DnaJ"/>
    <property type="match status" value="1"/>
</dbReference>
<dbReference type="FunFam" id="2.60.260.20:FF:000004">
    <property type="entry name" value="Molecular chaperone DnaJ"/>
    <property type="match status" value="1"/>
</dbReference>
<dbReference type="FunFam" id="2.60.260.20:FF:000009">
    <property type="entry name" value="Putative Mitochondrial DnaJ chaperone"/>
    <property type="match status" value="1"/>
</dbReference>
<dbReference type="Gene3D" id="6.20.20.10">
    <property type="match status" value="2"/>
</dbReference>
<dbReference type="Gene3D" id="1.10.287.110">
    <property type="entry name" value="DnaJ domain"/>
    <property type="match status" value="1"/>
</dbReference>
<dbReference type="Gene3D" id="2.60.260.20">
    <property type="entry name" value="Urease metallochaperone UreE, N-terminal domain"/>
    <property type="match status" value="2"/>
</dbReference>
<dbReference type="HAMAP" id="MF_01152">
    <property type="entry name" value="DnaJ"/>
    <property type="match status" value="1"/>
</dbReference>
<dbReference type="InterPro" id="IPR012724">
    <property type="entry name" value="DnaJ"/>
</dbReference>
<dbReference type="InterPro" id="IPR002939">
    <property type="entry name" value="DnaJ_C"/>
</dbReference>
<dbReference type="InterPro" id="IPR001623">
    <property type="entry name" value="DnaJ_domain"/>
</dbReference>
<dbReference type="InterPro" id="IPR018253">
    <property type="entry name" value="DnaJ_domain_CS"/>
</dbReference>
<dbReference type="InterPro" id="IPR008971">
    <property type="entry name" value="HSP40/DnaJ_pept-bd"/>
</dbReference>
<dbReference type="InterPro" id="IPR001305">
    <property type="entry name" value="HSP_DnaJ_Cys-rich_dom"/>
</dbReference>
<dbReference type="InterPro" id="IPR036410">
    <property type="entry name" value="HSP_DnaJ_Cys-rich_dom_sf"/>
</dbReference>
<dbReference type="InterPro" id="IPR036869">
    <property type="entry name" value="J_dom_sf"/>
</dbReference>
<dbReference type="NCBIfam" id="TIGR02349">
    <property type="entry name" value="DnaJ_bact"/>
    <property type="match status" value="1"/>
</dbReference>
<dbReference type="NCBIfam" id="NF008035">
    <property type="entry name" value="PRK10767.1"/>
    <property type="match status" value="1"/>
</dbReference>
<dbReference type="NCBIfam" id="NF010869">
    <property type="entry name" value="PRK14276.1"/>
    <property type="match status" value="1"/>
</dbReference>
<dbReference type="NCBIfam" id="NF010873">
    <property type="entry name" value="PRK14280.1"/>
    <property type="match status" value="1"/>
</dbReference>
<dbReference type="PANTHER" id="PTHR43096:SF48">
    <property type="entry name" value="CHAPERONE PROTEIN DNAJ"/>
    <property type="match status" value="1"/>
</dbReference>
<dbReference type="PANTHER" id="PTHR43096">
    <property type="entry name" value="DNAJ HOMOLOG 1, MITOCHONDRIAL-RELATED"/>
    <property type="match status" value="1"/>
</dbReference>
<dbReference type="Pfam" id="PF00226">
    <property type="entry name" value="DnaJ"/>
    <property type="match status" value="1"/>
</dbReference>
<dbReference type="Pfam" id="PF01556">
    <property type="entry name" value="DnaJ_C"/>
    <property type="match status" value="1"/>
</dbReference>
<dbReference type="Pfam" id="PF00684">
    <property type="entry name" value="DnaJ_CXXCXGXG"/>
    <property type="match status" value="1"/>
</dbReference>
<dbReference type="PRINTS" id="PR00625">
    <property type="entry name" value="JDOMAIN"/>
</dbReference>
<dbReference type="SMART" id="SM00271">
    <property type="entry name" value="DnaJ"/>
    <property type="match status" value="1"/>
</dbReference>
<dbReference type="SUPFAM" id="SSF46565">
    <property type="entry name" value="Chaperone J-domain"/>
    <property type="match status" value="1"/>
</dbReference>
<dbReference type="SUPFAM" id="SSF57938">
    <property type="entry name" value="DnaJ/Hsp40 cysteine-rich domain"/>
    <property type="match status" value="1"/>
</dbReference>
<dbReference type="SUPFAM" id="SSF49493">
    <property type="entry name" value="HSP40/DnaJ peptide-binding domain"/>
    <property type="match status" value="2"/>
</dbReference>
<dbReference type="PROSITE" id="PS00636">
    <property type="entry name" value="DNAJ_1"/>
    <property type="match status" value="1"/>
</dbReference>
<dbReference type="PROSITE" id="PS50076">
    <property type="entry name" value="DNAJ_2"/>
    <property type="match status" value="1"/>
</dbReference>
<dbReference type="PROSITE" id="PS51188">
    <property type="entry name" value="ZF_CR"/>
    <property type="match status" value="1"/>
</dbReference>
<organism>
    <name type="scientific">Listeria monocytogenes serotype 4a (strain HCC23)</name>
    <dbReference type="NCBI Taxonomy" id="552536"/>
    <lineage>
        <taxon>Bacteria</taxon>
        <taxon>Bacillati</taxon>
        <taxon>Bacillota</taxon>
        <taxon>Bacilli</taxon>
        <taxon>Bacillales</taxon>
        <taxon>Listeriaceae</taxon>
        <taxon>Listeria</taxon>
    </lineage>
</organism>
<keyword id="KW-0143">Chaperone</keyword>
<keyword id="KW-0963">Cytoplasm</keyword>
<keyword id="KW-0235">DNA replication</keyword>
<keyword id="KW-0479">Metal-binding</keyword>
<keyword id="KW-0677">Repeat</keyword>
<keyword id="KW-0346">Stress response</keyword>
<keyword id="KW-0862">Zinc</keyword>
<keyword id="KW-0863">Zinc-finger</keyword>
<name>DNAJ_LISMH</name>
<gene>
    <name evidence="1" type="primary">dnaJ</name>
    <name type="ordered locus">LMHCC_1098</name>
</gene>
<sequence length="376" mass="41020">MAKRDYYEVLGISKSASADEIKKAYRKLSKQYHPDINKEAGADEKFKEISEAYEALSDPQKRAQYDQYGHVDPNQGFGGGAGGGFGGGGFSGFEDIFDTFFGGGGRQQDPNAPRQGSDLQYTMRLKFKEAIFGKDAEIEIPREENCDTCHGSGAKPGTTPEKCSHCGGKGSINVEQNTPFGRVVNKRTCQYCNGTGKEIKEKCPTCHGKGRVTKTKKIKVKVPAGVNDGQQMRVSGEGEAGINGGPNGDLYVVFVVIPDEFFEREADDIYVEVPITFVQATLGDEIDVPTVHGKVRLKIPSGTQTGTTFRLRGKGVPHLRGNGTGDQHVIVKVIVPKKLDDKQKEILREFASTTGDKVDEQTSGFFDKMKRAFKGD</sequence>
<reference key="1">
    <citation type="journal article" date="2011" name="J. Bacteriol.">
        <title>Genome sequence of lineage III Listeria monocytogenes strain HCC23.</title>
        <authorList>
            <person name="Steele C.L."/>
            <person name="Donaldson J.R."/>
            <person name="Paul D."/>
            <person name="Banes M.M."/>
            <person name="Arick T."/>
            <person name="Bridges S.M."/>
            <person name="Lawrence M.L."/>
        </authorList>
    </citation>
    <scope>NUCLEOTIDE SEQUENCE [LARGE SCALE GENOMIC DNA]</scope>
    <source>
        <strain>HCC23</strain>
    </source>
</reference>
<accession>B8DE39</accession>
<protein>
    <recommendedName>
        <fullName evidence="1">Chaperone protein DnaJ</fullName>
    </recommendedName>
</protein>
<comment type="function">
    <text evidence="1">Participates actively in the response to hyperosmotic and heat shock by preventing the aggregation of stress-denatured proteins and by disaggregating proteins, also in an autonomous, DnaK-independent fashion. Unfolded proteins bind initially to DnaJ; upon interaction with the DnaJ-bound protein, DnaK hydrolyzes its bound ATP, resulting in the formation of a stable complex. GrpE releases ADP from DnaK; ATP binding to DnaK triggers the release of the substrate protein, thus completing the reaction cycle. Several rounds of ATP-dependent interactions between DnaJ, DnaK and GrpE are required for fully efficient folding. Also involved, together with DnaK and GrpE, in the DNA replication of plasmids through activation of initiation proteins.</text>
</comment>
<comment type="cofactor">
    <cofactor evidence="1">
        <name>Zn(2+)</name>
        <dbReference type="ChEBI" id="CHEBI:29105"/>
    </cofactor>
    <text evidence="1">Binds 2 Zn(2+) ions per monomer.</text>
</comment>
<comment type="subunit">
    <text evidence="1">Homodimer.</text>
</comment>
<comment type="subcellular location">
    <subcellularLocation>
        <location evidence="1">Cytoplasm</location>
    </subcellularLocation>
</comment>
<comment type="domain">
    <text evidence="1">The J domain is necessary and sufficient to stimulate DnaK ATPase activity. Zinc center 1 plays an important role in the autonomous, DnaK-independent chaperone activity of DnaJ. Zinc center 2 is essential for interaction with DnaK and for DnaJ activity.</text>
</comment>
<comment type="similarity">
    <text evidence="1">Belongs to the DnaJ family.</text>
</comment>
<evidence type="ECO:0000255" key="1">
    <source>
        <dbReference type="HAMAP-Rule" id="MF_01152"/>
    </source>
</evidence>